<comment type="function">
    <text evidence="1">Involved in the modulation of the specificity of the ClpAP-mediated ATP-dependent protein degradation.</text>
</comment>
<comment type="subunit">
    <text evidence="1">Binds to the N-terminal domain of the chaperone ClpA.</text>
</comment>
<comment type="similarity">
    <text evidence="1">Belongs to the ClpS family.</text>
</comment>
<sequence length="102" mass="11711">MSRTENIEHVEESVESELKQPSMYKVILNNDDYTPMDFVIEILQLFFRKDEAQATEIMLAIHHKGKGICGIYPFGIAETKVAQVNQFARQNEHPLLCSLEEA</sequence>
<organism>
    <name type="scientific">Shewanella piezotolerans (strain WP3 / JCM 13877)</name>
    <dbReference type="NCBI Taxonomy" id="225849"/>
    <lineage>
        <taxon>Bacteria</taxon>
        <taxon>Pseudomonadati</taxon>
        <taxon>Pseudomonadota</taxon>
        <taxon>Gammaproteobacteria</taxon>
        <taxon>Alteromonadales</taxon>
        <taxon>Shewanellaceae</taxon>
        <taxon>Shewanella</taxon>
    </lineage>
</organism>
<accession>B8CLI1</accession>
<name>CLPS_SHEPW</name>
<evidence type="ECO:0000255" key="1">
    <source>
        <dbReference type="HAMAP-Rule" id="MF_00302"/>
    </source>
</evidence>
<proteinExistence type="inferred from homology"/>
<feature type="chain" id="PRO_1000119504" description="ATP-dependent Clp protease adapter protein ClpS">
    <location>
        <begin position="1"/>
        <end position="102"/>
    </location>
</feature>
<gene>
    <name evidence="1" type="primary">clpS</name>
    <name type="ordered locus">swp_1870</name>
</gene>
<protein>
    <recommendedName>
        <fullName evidence="1">ATP-dependent Clp protease adapter protein ClpS</fullName>
    </recommendedName>
</protein>
<reference key="1">
    <citation type="journal article" date="2008" name="PLoS ONE">
        <title>Environmental adaptation: genomic analysis of the piezotolerant and psychrotolerant deep-sea iron reducing bacterium Shewanella piezotolerans WP3.</title>
        <authorList>
            <person name="Wang F."/>
            <person name="Wang J."/>
            <person name="Jian H."/>
            <person name="Zhang B."/>
            <person name="Li S."/>
            <person name="Wang F."/>
            <person name="Zeng X."/>
            <person name="Gao L."/>
            <person name="Bartlett D.H."/>
            <person name="Yu J."/>
            <person name="Hu S."/>
            <person name="Xiao X."/>
        </authorList>
    </citation>
    <scope>NUCLEOTIDE SEQUENCE [LARGE SCALE GENOMIC DNA]</scope>
    <source>
        <strain>WP3 / JCM 13877</strain>
    </source>
</reference>
<dbReference type="EMBL" id="CP000472">
    <property type="protein sequence ID" value="ACJ28632.1"/>
    <property type="molecule type" value="Genomic_DNA"/>
</dbReference>
<dbReference type="RefSeq" id="WP_020912009.1">
    <property type="nucleotide sequence ID" value="NC_011566.1"/>
</dbReference>
<dbReference type="SMR" id="B8CLI1"/>
<dbReference type="STRING" id="225849.swp_1870"/>
<dbReference type="KEGG" id="swp:swp_1870"/>
<dbReference type="eggNOG" id="COG2127">
    <property type="taxonomic scope" value="Bacteria"/>
</dbReference>
<dbReference type="HOGENOM" id="CLU_134358_2_1_6"/>
<dbReference type="OrthoDB" id="9796121at2"/>
<dbReference type="Proteomes" id="UP000000753">
    <property type="component" value="Chromosome"/>
</dbReference>
<dbReference type="GO" id="GO:0030163">
    <property type="term" value="P:protein catabolic process"/>
    <property type="evidence" value="ECO:0007669"/>
    <property type="project" value="InterPro"/>
</dbReference>
<dbReference type="GO" id="GO:0006508">
    <property type="term" value="P:proteolysis"/>
    <property type="evidence" value="ECO:0007669"/>
    <property type="project" value="UniProtKB-UniRule"/>
</dbReference>
<dbReference type="FunFam" id="3.30.1390.10:FF:000002">
    <property type="entry name" value="ATP-dependent Clp protease adapter protein ClpS"/>
    <property type="match status" value="1"/>
</dbReference>
<dbReference type="Gene3D" id="3.30.1390.10">
    <property type="match status" value="1"/>
</dbReference>
<dbReference type="HAMAP" id="MF_00302">
    <property type="entry name" value="ClpS"/>
    <property type="match status" value="1"/>
</dbReference>
<dbReference type="InterPro" id="IPR022935">
    <property type="entry name" value="ClpS"/>
</dbReference>
<dbReference type="InterPro" id="IPR003769">
    <property type="entry name" value="ClpS_core"/>
</dbReference>
<dbReference type="InterPro" id="IPR014719">
    <property type="entry name" value="Ribosomal_bL12_C/ClpS-like"/>
</dbReference>
<dbReference type="NCBIfam" id="NF000670">
    <property type="entry name" value="PRK00033.1-3"/>
    <property type="match status" value="1"/>
</dbReference>
<dbReference type="NCBIfam" id="NF000672">
    <property type="entry name" value="PRK00033.1-5"/>
    <property type="match status" value="1"/>
</dbReference>
<dbReference type="PANTHER" id="PTHR33473:SF19">
    <property type="entry name" value="ATP-DEPENDENT CLP PROTEASE ADAPTER PROTEIN CLPS"/>
    <property type="match status" value="1"/>
</dbReference>
<dbReference type="PANTHER" id="PTHR33473">
    <property type="entry name" value="ATP-DEPENDENT CLP PROTEASE ADAPTER PROTEIN CLPS1, CHLOROPLASTIC"/>
    <property type="match status" value="1"/>
</dbReference>
<dbReference type="Pfam" id="PF02617">
    <property type="entry name" value="ClpS"/>
    <property type="match status" value="1"/>
</dbReference>
<dbReference type="SUPFAM" id="SSF54736">
    <property type="entry name" value="ClpS-like"/>
    <property type="match status" value="1"/>
</dbReference>